<keyword id="KW-0687">Ribonucleoprotein</keyword>
<keyword id="KW-0689">Ribosomal protein</keyword>
<accession>A6U877</accession>
<reference key="1">
    <citation type="submission" date="2007-06" db="EMBL/GenBank/DDBJ databases">
        <title>Complete sequence of Sinorhizobium medicae WSM419 chromosome.</title>
        <authorList>
            <consortium name="US DOE Joint Genome Institute"/>
            <person name="Copeland A."/>
            <person name="Lucas S."/>
            <person name="Lapidus A."/>
            <person name="Barry K."/>
            <person name="Glavina del Rio T."/>
            <person name="Dalin E."/>
            <person name="Tice H."/>
            <person name="Pitluck S."/>
            <person name="Chain P."/>
            <person name="Malfatti S."/>
            <person name="Shin M."/>
            <person name="Vergez L."/>
            <person name="Schmutz J."/>
            <person name="Larimer F."/>
            <person name="Land M."/>
            <person name="Hauser L."/>
            <person name="Kyrpides N."/>
            <person name="Mikhailova N."/>
            <person name="Reeve W.G."/>
            <person name="Richardson P."/>
        </authorList>
    </citation>
    <scope>NUCLEOTIDE SEQUENCE [LARGE SCALE GENOMIC DNA]</scope>
    <source>
        <strain>WSM419</strain>
    </source>
</reference>
<proteinExistence type="inferred from homology"/>
<protein>
    <recommendedName>
        <fullName evidence="1">Large ribosomal subunit protein uL30</fullName>
    </recommendedName>
    <alternativeName>
        <fullName evidence="2">50S ribosomal protein L30</fullName>
    </alternativeName>
</protein>
<sequence length="67" mass="7541">MAKKEVAKKTVTVEQIGSPIRRPAVQRQTLVGLGLNKMHRVRTLEDTPAVRGMIRAVQHLVRVVDEK</sequence>
<evidence type="ECO:0000255" key="1">
    <source>
        <dbReference type="HAMAP-Rule" id="MF_01371"/>
    </source>
</evidence>
<evidence type="ECO:0000305" key="2"/>
<dbReference type="EMBL" id="CP000738">
    <property type="protein sequence ID" value="ABR59857.1"/>
    <property type="molecule type" value="Genomic_DNA"/>
</dbReference>
<dbReference type="RefSeq" id="WP_003536508.1">
    <property type="nucleotide sequence ID" value="NC_009636.1"/>
</dbReference>
<dbReference type="RefSeq" id="YP_001326692.1">
    <property type="nucleotide sequence ID" value="NC_009636.1"/>
</dbReference>
<dbReference type="SMR" id="A6U877"/>
<dbReference type="STRING" id="366394.Smed_1004"/>
<dbReference type="GeneID" id="89575698"/>
<dbReference type="KEGG" id="smd:Smed_1004"/>
<dbReference type="PATRIC" id="fig|366394.8.peg.4125"/>
<dbReference type="eggNOG" id="COG1841">
    <property type="taxonomic scope" value="Bacteria"/>
</dbReference>
<dbReference type="HOGENOM" id="CLU_131047_1_2_5"/>
<dbReference type="OrthoDB" id="9812790at2"/>
<dbReference type="Proteomes" id="UP000001108">
    <property type="component" value="Chromosome"/>
</dbReference>
<dbReference type="GO" id="GO:0022625">
    <property type="term" value="C:cytosolic large ribosomal subunit"/>
    <property type="evidence" value="ECO:0007669"/>
    <property type="project" value="TreeGrafter"/>
</dbReference>
<dbReference type="GO" id="GO:0003735">
    <property type="term" value="F:structural constituent of ribosome"/>
    <property type="evidence" value="ECO:0007669"/>
    <property type="project" value="InterPro"/>
</dbReference>
<dbReference type="GO" id="GO:0006412">
    <property type="term" value="P:translation"/>
    <property type="evidence" value="ECO:0007669"/>
    <property type="project" value="UniProtKB-UniRule"/>
</dbReference>
<dbReference type="CDD" id="cd01658">
    <property type="entry name" value="Ribosomal_L30"/>
    <property type="match status" value="1"/>
</dbReference>
<dbReference type="Gene3D" id="3.30.1390.20">
    <property type="entry name" value="Ribosomal protein L30, ferredoxin-like fold domain"/>
    <property type="match status" value="1"/>
</dbReference>
<dbReference type="HAMAP" id="MF_01371_B">
    <property type="entry name" value="Ribosomal_uL30_B"/>
    <property type="match status" value="1"/>
</dbReference>
<dbReference type="InterPro" id="IPR036919">
    <property type="entry name" value="Ribo_uL30_ferredoxin-like_sf"/>
</dbReference>
<dbReference type="InterPro" id="IPR005996">
    <property type="entry name" value="Ribosomal_uL30_bac-type"/>
</dbReference>
<dbReference type="InterPro" id="IPR016082">
    <property type="entry name" value="Ribosomal_uL30_ferredoxin-like"/>
</dbReference>
<dbReference type="NCBIfam" id="TIGR01308">
    <property type="entry name" value="rpmD_bact"/>
    <property type="match status" value="1"/>
</dbReference>
<dbReference type="PANTHER" id="PTHR15892:SF2">
    <property type="entry name" value="LARGE RIBOSOMAL SUBUNIT PROTEIN UL30M"/>
    <property type="match status" value="1"/>
</dbReference>
<dbReference type="PANTHER" id="PTHR15892">
    <property type="entry name" value="MITOCHONDRIAL RIBOSOMAL PROTEIN L30"/>
    <property type="match status" value="1"/>
</dbReference>
<dbReference type="Pfam" id="PF00327">
    <property type="entry name" value="Ribosomal_L30"/>
    <property type="match status" value="1"/>
</dbReference>
<dbReference type="PIRSF" id="PIRSF002211">
    <property type="entry name" value="Ribosomal_L30_bac-type"/>
    <property type="match status" value="1"/>
</dbReference>
<dbReference type="SUPFAM" id="SSF55129">
    <property type="entry name" value="Ribosomal protein L30p/L7e"/>
    <property type="match status" value="1"/>
</dbReference>
<comment type="subunit">
    <text evidence="1">Part of the 50S ribosomal subunit.</text>
</comment>
<comment type="similarity">
    <text evidence="1">Belongs to the universal ribosomal protein uL30 family.</text>
</comment>
<organism>
    <name type="scientific">Sinorhizobium medicae (strain WSM419)</name>
    <name type="common">Ensifer medicae</name>
    <dbReference type="NCBI Taxonomy" id="366394"/>
    <lineage>
        <taxon>Bacteria</taxon>
        <taxon>Pseudomonadati</taxon>
        <taxon>Pseudomonadota</taxon>
        <taxon>Alphaproteobacteria</taxon>
        <taxon>Hyphomicrobiales</taxon>
        <taxon>Rhizobiaceae</taxon>
        <taxon>Sinorhizobium/Ensifer group</taxon>
        <taxon>Sinorhizobium</taxon>
    </lineage>
</organism>
<feature type="chain" id="PRO_0000347143" description="Large ribosomal subunit protein uL30">
    <location>
        <begin position="1"/>
        <end position="67"/>
    </location>
</feature>
<name>RL30_SINMW</name>
<gene>
    <name evidence="1" type="primary">rpmD</name>
    <name type="ordered locus">Smed_1004</name>
</gene>